<sequence length="85" mass="9571">MFLYRLICLFILICIITVDISTSEEISDGVEDKNNNPAIPREPSKITNGEEKTKEKSKLQVVEITEPLHACTSRDIWISGSTPCF</sequence>
<name>TXVN1_APHGI</name>
<feature type="signal peptide" evidence="1">
    <location>
        <begin position="1"/>
        <end position="23"/>
    </location>
</feature>
<feature type="chain" id="PRO_5032695083" description="Insecticidal toxin Vn1">
    <location>
        <begin position="24"/>
        <end position="85"/>
    </location>
</feature>
<feature type="disulfide bond" evidence="4">
    <location>
        <begin position="71"/>
        <end position="84"/>
    </location>
</feature>
<dbReference type="EMBL" id="JACMRX010000006">
    <property type="protein sequence ID" value="KAF7988184.1"/>
    <property type="molecule type" value="Genomic_DNA"/>
</dbReference>
<dbReference type="Proteomes" id="UP000639338">
    <property type="component" value="Unassembled WGS sequence"/>
</dbReference>
<proteinExistence type="evidence at transcript level"/>
<organism>
    <name type="scientific">Aphidius gifuensis</name>
    <name type="common">Parasitoid wasp</name>
    <dbReference type="NCBI Taxonomy" id="684658"/>
    <lineage>
        <taxon>Eukaryota</taxon>
        <taxon>Metazoa</taxon>
        <taxon>Ecdysozoa</taxon>
        <taxon>Arthropoda</taxon>
        <taxon>Hexapoda</taxon>
        <taxon>Insecta</taxon>
        <taxon>Pterygota</taxon>
        <taxon>Neoptera</taxon>
        <taxon>Endopterygota</taxon>
        <taxon>Hymenoptera</taxon>
        <taxon>Apocrita</taxon>
        <taxon>Ichneumonoidea</taxon>
        <taxon>Braconidae</taxon>
        <taxon>Aphidiinae</taxon>
        <taxon>Aphidius</taxon>
    </lineage>
</organism>
<keyword id="KW-1015">Disulfide bond</keyword>
<keyword id="KW-1185">Reference proteome</keyword>
<keyword id="KW-0964">Secreted</keyword>
<keyword id="KW-0732">Signal</keyword>
<keyword id="KW-0800">Toxin</keyword>
<evidence type="ECO:0000255" key="1"/>
<evidence type="ECO:0000269" key="2">
    <source>
    </source>
</evidence>
<evidence type="ECO:0000303" key="3">
    <source>
    </source>
</evidence>
<evidence type="ECO:0000305" key="4"/>
<evidence type="ECO:0000305" key="5">
    <source>
    </source>
</evidence>
<evidence type="ECO:0000312" key="6">
    <source>
        <dbReference type="EMBL" id="KAF7988184.1"/>
    </source>
</evidence>
<evidence type="ECO:0000312" key="7">
    <source>
        <dbReference type="Proteomes" id="UP000639338"/>
    </source>
</evidence>
<protein>
    <recommendedName>
        <fullName evidence="3">Insecticidal toxin Vn1</fullName>
    </recommendedName>
</protein>
<comment type="function">
    <text evidence="2">Endoparasitoid venom toxin that exhibits insecticidal activity against Tenebrio molitor pupae. Impacts genes related to immune response, environmental information processing, metabolism, and response to external stimuli in T.molitor, suggesting its involvement in the intricate parasitoid wasp-host interaction.</text>
</comment>
<comment type="subcellular location">
    <subcellularLocation>
        <location evidence="5">Secreted</location>
    </subcellularLocation>
</comment>
<comment type="tissue specificity">
    <text evidence="2">Highly expressed in the venom apparatus, and weakly expressed in residual body.</text>
</comment>
<accession>A0A835CKX4</accession>
<reference key="1">
    <citation type="journal article" date="2025" name="Pest Manag. Sci.">
        <title>Unraveling the venom constituents of the endoparasitoid Aphidius gifuensis with an emphasis on the discovery of a novel insecticidal peptide.</title>
        <authorList>
            <person name="Wang K."/>
            <person name="Wu G."/>
            <person name="Ma Q."/>
            <person name="Yang L."/>
            <person name="Wu C."/>
            <person name="Zhu J."/>
        </authorList>
    </citation>
    <scope>NUCLEOTIDE SEQUENCE [MRNA]</scope>
    <scope>FUNCTION</scope>
    <scope>SYNTHESIS OF 24-85</scope>
    <scope>TISSUE SPECIFICITY</scope>
    <source>
        <tissue>Venom gland</tissue>
    </source>
</reference>
<reference evidence="6 7" key="2">
    <citation type="submission" date="2020-08" db="EMBL/GenBank/DDBJ databases">
        <title>Aphidius gifuensis genome sequencing and assembly.</title>
        <authorList>
            <person name="Du Z."/>
        </authorList>
    </citation>
    <scope>NUCLEOTIDE SEQUENCE [LARGE SCALE GENOMIC DNA]</scope>
    <source>
        <strain>YNYX2018</strain>
    </source>
</reference>
<gene>
    <name evidence="6" type="ORF">HCN44_007678</name>
</gene>